<sequence>MAHTLPPLPYALDALAPRISKETLEFHYGKHHQTYVTNLNNLIPGTEFENLSLEEIVKKSSGGVFNNAAQVWNHTFYWNSLSPNGGGEPSGALADAIKAKWGSVDAFKEAFNKSAAGNFGSGWTWLVKKADGTLDIVNTSNAATPLTTADKALLTCDVWEHAYYIDYRNARPKYLENFWALVNWEFAAKNFA</sequence>
<gene>
    <name type="primary">sodB</name>
    <name type="ordered locus">BP2761</name>
</gene>
<dbReference type="EC" id="1.15.1.1"/>
<dbReference type="EMBL" id="X63055">
    <property type="protein sequence ID" value="CAA44779.1"/>
    <property type="molecule type" value="Genomic_DNA"/>
</dbReference>
<dbReference type="EMBL" id="M83095">
    <property type="protein sequence ID" value="AAC36882.1"/>
    <property type="molecule type" value="Unassigned_DNA"/>
</dbReference>
<dbReference type="EMBL" id="BX640419">
    <property type="protein sequence ID" value="CAE43036.1"/>
    <property type="molecule type" value="Genomic_DNA"/>
</dbReference>
<dbReference type="PIR" id="I40319">
    <property type="entry name" value="I40319"/>
</dbReference>
<dbReference type="RefSeq" id="NP_881365.1">
    <property type="nucleotide sequence ID" value="NC_002929.2"/>
</dbReference>
<dbReference type="RefSeq" id="WP_010931119.1">
    <property type="nucleotide sequence ID" value="NZ_CP039022.1"/>
</dbReference>
<dbReference type="SMR" id="P37369"/>
<dbReference type="STRING" id="257313.BP2761"/>
<dbReference type="PaxDb" id="257313-BP2761"/>
<dbReference type="GeneID" id="69602662"/>
<dbReference type="KEGG" id="bpe:BP2761"/>
<dbReference type="PATRIC" id="fig|257313.5.peg.2977"/>
<dbReference type="eggNOG" id="COG0605">
    <property type="taxonomic scope" value="Bacteria"/>
</dbReference>
<dbReference type="HOGENOM" id="CLU_031625_0_0_4"/>
<dbReference type="Proteomes" id="UP000002676">
    <property type="component" value="Chromosome"/>
</dbReference>
<dbReference type="GO" id="GO:0046872">
    <property type="term" value="F:metal ion binding"/>
    <property type="evidence" value="ECO:0007669"/>
    <property type="project" value="UniProtKB-KW"/>
</dbReference>
<dbReference type="GO" id="GO:0004784">
    <property type="term" value="F:superoxide dismutase activity"/>
    <property type="evidence" value="ECO:0007669"/>
    <property type="project" value="UniProtKB-EC"/>
</dbReference>
<dbReference type="FunFam" id="1.10.287.990:FF:000002">
    <property type="entry name" value="Superoxide dismutase"/>
    <property type="match status" value="1"/>
</dbReference>
<dbReference type="FunFam" id="3.55.40.20:FF:000001">
    <property type="entry name" value="Superoxide dismutase"/>
    <property type="match status" value="1"/>
</dbReference>
<dbReference type="Gene3D" id="1.10.287.990">
    <property type="entry name" value="Fe,Mn superoxide dismutase (SOD) domain"/>
    <property type="match status" value="1"/>
</dbReference>
<dbReference type="Gene3D" id="3.55.40.20">
    <property type="entry name" value="Iron/manganese superoxide dismutase, C-terminal domain"/>
    <property type="match status" value="1"/>
</dbReference>
<dbReference type="InterPro" id="IPR001189">
    <property type="entry name" value="Mn/Fe_SOD"/>
</dbReference>
<dbReference type="InterPro" id="IPR019833">
    <property type="entry name" value="Mn/Fe_SOD_BS"/>
</dbReference>
<dbReference type="InterPro" id="IPR019832">
    <property type="entry name" value="Mn/Fe_SOD_C"/>
</dbReference>
<dbReference type="InterPro" id="IPR019831">
    <property type="entry name" value="Mn/Fe_SOD_N"/>
</dbReference>
<dbReference type="InterPro" id="IPR036324">
    <property type="entry name" value="Mn/Fe_SOD_N_sf"/>
</dbReference>
<dbReference type="InterPro" id="IPR036314">
    <property type="entry name" value="SOD_C_sf"/>
</dbReference>
<dbReference type="PANTHER" id="PTHR42769">
    <property type="entry name" value="SUPEROXIDE DISMUTASE"/>
    <property type="match status" value="1"/>
</dbReference>
<dbReference type="PANTHER" id="PTHR42769:SF3">
    <property type="entry name" value="SUPEROXIDE DISMUTASE [FE] 2, CHLOROPLASTIC"/>
    <property type="match status" value="1"/>
</dbReference>
<dbReference type="Pfam" id="PF02777">
    <property type="entry name" value="Sod_Fe_C"/>
    <property type="match status" value="1"/>
</dbReference>
<dbReference type="Pfam" id="PF00081">
    <property type="entry name" value="Sod_Fe_N"/>
    <property type="match status" value="1"/>
</dbReference>
<dbReference type="PIRSF" id="PIRSF000349">
    <property type="entry name" value="SODismutase"/>
    <property type="match status" value="1"/>
</dbReference>
<dbReference type="PRINTS" id="PR01703">
    <property type="entry name" value="MNSODISMTASE"/>
</dbReference>
<dbReference type="SUPFAM" id="SSF54719">
    <property type="entry name" value="Fe,Mn superoxide dismutase (SOD), C-terminal domain"/>
    <property type="match status" value="1"/>
</dbReference>
<dbReference type="SUPFAM" id="SSF46609">
    <property type="entry name" value="Fe,Mn superoxide dismutase (SOD), N-terminal domain"/>
    <property type="match status" value="1"/>
</dbReference>
<dbReference type="PROSITE" id="PS00088">
    <property type="entry name" value="SOD_MN"/>
    <property type="match status" value="1"/>
</dbReference>
<comment type="function">
    <text>Destroys superoxide anion radicals which are normally produced within the cells and which are toxic to biological systems.</text>
</comment>
<comment type="catalytic activity">
    <reaction>
        <text>2 superoxide + 2 H(+) = H2O2 + O2</text>
        <dbReference type="Rhea" id="RHEA:20696"/>
        <dbReference type="ChEBI" id="CHEBI:15378"/>
        <dbReference type="ChEBI" id="CHEBI:15379"/>
        <dbReference type="ChEBI" id="CHEBI:16240"/>
        <dbReference type="ChEBI" id="CHEBI:18421"/>
        <dbReference type="EC" id="1.15.1.1"/>
    </reaction>
</comment>
<comment type="cofactor">
    <cofactor evidence="1">
        <name>Fe cation</name>
        <dbReference type="ChEBI" id="CHEBI:24875"/>
    </cofactor>
    <text evidence="1">Binds 1 Fe cation per subunit.</text>
</comment>
<comment type="subunit">
    <text evidence="1">Homodimer.</text>
</comment>
<comment type="similarity">
    <text evidence="2">Belongs to the iron/manganese superoxide dismutase family.</text>
</comment>
<accession>P37369</accession>
<feature type="chain" id="PRO_0000159974" description="Superoxide dismutase [Fe]">
    <location>
        <begin position="1"/>
        <end position="192"/>
    </location>
</feature>
<feature type="binding site" evidence="1">
    <location>
        <position position="27"/>
    </location>
    <ligand>
        <name>Fe cation</name>
        <dbReference type="ChEBI" id="CHEBI:24875"/>
    </ligand>
</feature>
<feature type="binding site" evidence="1">
    <location>
        <position position="74"/>
    </location>
    <ligand>
        <name>Fe cation</name>
        <dbReference type="ChEBI" id="CHEBI:24875"/>
    </ligand>
</feature>
<feature type="binding site" evidence="1">
    <location>
        <position position="157"/>
    </location>
    <ligand>
        <name>Fe cation</name>
        <dbReference type="ChEBI" id="CHEBI:24875"/>
    </ligand>
</feature>
<feature type="binding site" evidence="1">
    <location>
        <position position="161"/>
    </location>
    <ligand>
        <name>Fe cation</name>
        <dbReference type="ChEBI" id="CHEBI:24875"/>
    </ligand>
</feature>
<feature type="sequence conflict" description="In Ref. 1; CAA44779/AAC36882." evidence="2" ref="1">
    <original>I</original>
    <variation>V</variation>
    <location>
        <position position="43"/>
    </location>
</feature>
<protein>
    <recommendedName>
        <fullName>Superoxide dismutase [Fe]</fullName>
        <ecNumber>1.15.1.1</ecNumber>
    </recommendedName>
</protein>
<organism>
    <name type="scientific">Bordetella pertussis (strain Tohama I / ATCC BAA-589 / NCTC 13251)</name>
    <dbReference type="NCBI Taxonomy" id="257313"/>
    <lineage>
        <taxon>Bacteria</taxon>
        <taxon>Pseudomonadati</taxon>
        <taxon>Pseudomonadota</taxon>
        <taxon>Betaproteobacteria</taxon>
        <taxon>Burkholderiales</taxon>
        <taxon>Alcaligenaceae</taxon>
        <taxon>Bordetella</taxon>
    </lineage>
</organism>
<keyword id="KW-0408">Iron</keyword>
<keyword id="KW-0479">Metal-binding</keyword>
<keyword id="KW-0560">Oxidoreductase</keyword>
<keyword id="KW-1185">Reference proteome</keyword>
<name>SODF_BORPE</name>
<evidence type="ECO:0000250" key="1"/>
<evidence type="ECO:0000305" key="2"/>
<proteinExistence type="inferred from homology"/>
<reference key="1">
    <citation type="journal article" date="1994" name="Gene">
        <title>Characterization of the gene encoding superoxide dismutase of Bordetella pertussis and construction of a SOD-deficient mutant.</title>
        <authorList>
            <person name="Deshazer D."/>
            <person name="Bannan J.D."/>
            <person name="Moran M.J."/>
            <person name="Friedman R.L."/>
        </authorList>
    </citation>
    <scope>NUCLEOTIDE SEQUENCE [GENOMIC DNA]</scope>
    <source>
        <strain>BP504</strain>
    </source>
</reference>
<reference key="2">
    <citation type="journal article" date="2003" name="Nat. Genet.">
        <title>Comparative analysis of the genome sequences of Bordetella pertussis, Bordetella parapertussis and Bordetella bronchiseptica.</title>
        <authorList>
            <person name="Parkhill J."/>
            <person name="Sebaihia M."/>
            <person name="Preston A."/>
            <person name="Murphy L.D."/>
            <person name="Thomson N.R."/>
            <person name="Harris D.E."/>
            <person name="Holden M.T.G."/>
            <person name="Churcher C.M."/>
            <person name="Bentley S.D."/>
            <person name="Mungall K.L."/>
            <person name="Cerdeno-Tarraga A.-M."/>
            <person name="Temple L."/>
            <person name="James K.D."/>
            <person name="Harris B."/>
            <person name="Quail M.A."/>
            <person name="Achtman M."/>
            <person name="Atkin R."/>
            <person name="Baker S."/>
            <person name="Basham D."/>
            <person name="Bason N."/>
            <person name="Cherevach I."/>
            <person name="Chillingworth T."/>
            <person name="Collins M."/>
            <person name="Cronin A."/>
            <person name="Davis P."/>
            <person name="Doggett J."/>
            <person name="Feltwell T."/>
            <person name="Goble A."/>
            <person name="Hamlin N."/>
            <person name="Hauser H."/>
            <person name="Holroyd S."/>
            <person name="Jagels K."/>
            <person name="Leather S."/>
            <person name="Moule S."/>
            <person name="Norberczak H."/>
            <person name="O'Neil S."/>
            <person name="Ormond D."/>
            <person name="Price C."/>
            <person name="Rabbinowitsch E."/>
            <person name="Rutter S."/>
            <person name="Sanders M."/>
            <person name="Saunders D."/>
            <person name="Seeger K."/>
            <person name="Sharp S."/>
            <person name="Simmonds M."/>
            <person name="Skelton J."/>
            <person name="Squares R."/>
            <person name="Squares S."/>
            <person name="Stevens K."/>
            <person name="Unwin L."/>
            <person name="Whitehead S."/>
            <person name="Barrell B.G."/>
            <person name="Maskell D.J."/>
        </authorList>
    </citation>
    <scope>NUCLEOTIDE SEQUENCE [LARGE SCALE GENOMIC DNA]</scope>
    <source>
        <strain>Tohama I / ATCC BAA-589 / NCTC 13251</strain>
    </source>
</reference>